<feature type="chain" id="PRO_0000253897" description="Rho guanine nucleotide exchange factor 9">
    <location>
        <begin position="1"/>
        <end position="564"/>
    </location>
</feature>
<feature type="domain" description="SH3" evidence="6">
    <location>
        <begin position="8"/>
        <end position="67"/>
    </location>
</feature>
<feature type="domain" description="DH" evidence="4">
    <location>
        <begin position="103"/>
        <end position="287"/>
    </location>
</feature>
<feature type="domain" description="PH" evidence="5">
    <location>
        <begin position="318"/>
        <end position="425"/>
    </location>
</feature>
<feature type="region of interest" description="Interaction with GPHN" evidence="1">
    <location>
        <begin position="100"/>
        <end position="110"/>
    </location>
</feature>
<feature type="region of interest" description="Disordered" evidence="7">
    <location>
        <begin position="451"/>
        <end position="470"/>
    </location>
</feature>
<feature type="modified residue" description="Phosphoserine" evidence="2">
    <location>
        <position position="502"/>
    </location>
</feature>
<comment type="function">
    <text evidence="3">Acts as a guanine nucleotide exchange factor (GEF) for CDC42. Promotes formation of GPHN clusters (By similarity).</text>
</comment>
<comment type="subunit">
    <text evidence="3">Interacts with GPHN.</text>
</comment>
<comment type="subcellular location">
    <subcellularLocation>
        <location evidence="3">Cytoplasm</location>
    </subcellularLocation>
    <subcellularLocation>
        <location evidence="2">Postsynaptic density</location>
    </subcellularLocation>
</comment>
<protein>
    <recommendedName>
        <fullName>Rho guanine nucleotide exchange factor 9</fullName>
    </recommendedName>
    <alternativeName>
        <fullName>Collybistin</fullName>
    </alternativeName>
    <alternativeName>
        <fullName>Rac/Cdc42 guanine nucleotide exchange factor 9</fullName>
    </alternativeName>
</protein>
<organism>
    <name type="scientific">Pongo abelii</name>
    <name type="common">Sumatran orangutan</name>
    <name type="synonym">Pongo pygmaeus abelii</name>
    <dbReference type="NCBI Taxonomy" id="9601"/>
    <lineage>
        <taxon>Eukaryota</taxon>
        <taxon>Metazoa</taxon>
        <taxon>Chordata</taxon>
        <taxon>Craniata</taxon>
        <taxon>Vertebrata</taxon>
        <taxon>Euteleostomi</taxon>
        <taxon>Mammalia</taxon>
        <taxon>Eutheria</taxon>
        <taxon>Euarchontoglires</taxon>
        <taxon>Primates</taxon>
        <taxon>Haplorrhini</taxon>
        <taxon>Catarrhini</taxon>
        <taxon>Hominidae</taxon>
        <taxon>Pongo</taxon>
    </lineage>
</organism>
<reference key="1">
    <citation type="submission" date="2004-11" db="EMBL/GenBank/DDBJ databases">
        <authorList>
            <consortium name="The German cDNA consortium"/>
        </authorList>
    </citation>
    <scope>NUCLEOTIDE SEQUENCE [LARGE SCALE MRNA]</scope>
    <source>
        <tissue>Brain cortex</tissue>
    </source>
</reference>
<accession>Q5RDK0</accession>
<proteinExistence type="evidence at transcript level"/>
<keyword id="KW-0963">Cytoplasm</keyword>
<keyword id="KW-0344">Guanine-nucleotide releasing factor</keyword>
<keyword id="KW-0597">Phosphoprotein</keyword>
<keyword id="KW-1185">Reference proteome</keyword>
<keyword id="KW-0728">SH3 domain</keyword>
<keyword id="KW-0770">Synapse</keyword>
<gene>
    <name type="primary">ARHGEF9</name>
</gene>
<evidence type="ECO:0000250" key="1"/>
<evidence type="ECO:0000250" key="2">
    <source>
        <dbReference type="UniProtKB" id="Q3UTH8"/>
    </source>
</evidence>
<evidence type="ECO:0000250" key="3">
    <source>
        <dbReference type="UniProtKB" id="Q9QX73"/>
    </source>
</evidence>
<evidence type="ECO:0000255" key="4">
    <source>
        <dbReference type="PROSITE-ProRule" id="PRU00062"/>
    </source>
</evidence>
<evidence type="ECO:0000255" key="5">
    <source>
        <dbReference type="PROSITE-ProRule" id="PRU00145"/>
    </source>
</evidence>
<evidence type="ECO:0000255" key="6">
    <source>
        <dbReference type="PROSITE-ProRule" id="PRU00192"/>
    </source>
</evidence>
<evidence type="ECO:0000256" key="7">
    <source>
        <dbReference type="SAM" id="MobiDB-lite"/>
    </source>
</evidence>
<sequence>MTLLITGDSIVSAEAVWDHATMANRELAFKAGDVIKVLDASNKDWWWGQIDDEEGWFPASFVRLWVNQEDEVEEGPSDVQNGHLDPNSDCLCLGRPLQNRDQMRANVINEIMSTERHYIKHLKDICEGYLKQCRKRRDMFSDEQLKVIFGNIEDIYRFQMGFVRDLEKQYNNDDPHLSEIGPCFLEHQDGFWIYSEYCNNHLDACMELSKLMKDSRYQHFFEACRLLQQMIDIAIDGFLLTPVQKICKYPLQLAELLKYTAQDHSDYRYVAAALAVMRNVTQQINERKRRLENIDKIAQWQASVLDWEGEDILDRSSELIYTGEMAWIYQPYGRNQQRVFFLFDHQMVLCKKDLIRRDILYYKGRIDMDKYEVVDIEDGRDDDFNVSMKNAFKLHNKETEEIHLFFAKKLEEKIRWLRAFREERKMVQEDEKIGFEISENQKRQAAMTVRKVPKQKGVNSARSVPPSYPPPQDPLNHGQYLVPDGIAQSQVFEFTEPKRSQSPFWQNFSRYCEGIKKPNRSKRVSDYDDAGVDFCSGNILHSGCFFYHWGFPCCSTAGSLQFCI</sequence>
<name>ARHG9_PONAB</name>
<dbReference type="EMBL" id="CR857907">
    <property type="protein sequence ID" value="CAH90157.1"/>
    <property type="molecule type" value="mRNA"/>
</dbReference>
<dbReference type="RefSeq" id="NP_001125046.1">
    <property type="nucleotide sequence ID" value="NM_001131574.1"/>
</dbReference>
<dbReference type="BMRB" id="Q5RDK0"/>
<dbReference type="SMR" id="Q5RDK0"/>
<dbReference type="FunCoup" id="Q5RDK0">
    <property type="interactions" value="193"/>
</dbReference>
<dbReference type="STRING" id="9601.ENSPPYP00000022845"/>
<dbReference type="GeneID" id="100171927"/>
<dbReference type="KEGG" id="pon:100171927"/>
<dbReference type="CTD" id="23229"/>
<dbReference type="eggNOG" id="KOG3519">
    <property type="taxonomic scope" value="Eukaryota"/>
</dbReference>
<dbReference type="InParanoid" id="Q5RDK0"/>
<dbReference type="OrthoDB" id="660555at2759"/>
<dbReference type="Proteomes" id="UP000001595">
    <property type="component" value="Unplaced"/>
</dbReference>
<dbReference type="GO" id="GO:0005829">
    <property type="term" value="C:cytosol"/>
    <property type="evidence" value="ECO:0007669"/>
    <property type="project" value="UniProtKB-ARBA"/>
</dbReference>
<dbReference type="GO" id="GO:0014069">
    <property type="term" value="C:postsynaptic density"/>
    <property type="evidence" value="ECO:0000250"/>
    <property type="project" value="UniProtKB"/>
</dbReference>
<dbReference type="GO" id="GO:0005085">
    <property type="term" value="F:guanyl-nucleotide exchange factor activity"/>
    <property type="evidence" value="ECO:0007669"/>
    <property type="project" value="UniProtKB-KW"/>
</dbReference>
<dbReference type="CDD" id="cd01224">
    <property type="entry name" value="PH_Collybistin_ASEF"/>
    <property type="match status" value="1"/>
</dbReference>
<dbReference type="CDD" id="cd00160">
    <property type="entry name" value="RhoGEF"/>
    <property type="match status" value="1"/>
</dbReference>
<dbReference type="CDD" id="cd11975">
    <property type="entry name" value="SH3_ARHGEF9"/>
    <property type="match status" value="1"/>
</dbReference>
<dbReference type="FunFam" id="1.20.900.10:FF:000002">
    <property type="entry name" value="Rho guanine nucleotide exchange factor 9"/>
    <property type="match status" value="1"/>
</dbReference>
<dbReference type="FunFam" id="2.30.29.30:FF:000015">
    <property type="entry name" value="Rho guanine nucleotide exchange factor 9"/>
    <property type="match status" value="1"/>
</dbReference>
<dbReference type="FunFam" id="2.30.30.40:FF:000037">
    <property type="entry name" value="Rho guanine nucleotide exchange factor 9"/>
    <property type="match status" value="1"/>
</dbReference>
<dbReference type="Gene3D" id="1.20.900.10">
    <property type="entry name" value="Dbl homology (DH) domain"/>
    <property type="match status" value="1"/>
</dbReference>
<dbReference type="Gene3D" id="2.30.29.30">
    <property type="entry name" value="Pleckstrin-homology domain (PH domain)/Phosphotyrosine-binding domain (PTB)"/>
    <property type="match status" value="1"/>
</dbReference>
<dbReference type="Gene3D" id="2.30.30.40">
    <property type="entry name" value="SH3 Domains"/>
    <property type="match status" value="1"/>
</dbReference>
<dbReference type="InterPro" id="IPR035728">
    <property type="entry name" value="ARHGEF9_SH3"/>
</dbReference>
<dbReference type="InterPro" id="IPR035899">
    <property type="entry name" value="DBL_dom_sf"/>
</dbReference>
<dbReference type="InterPro" id="IPR000219">
    <property type="entry name" value="DH_dom"/>
</dbReference>
<dbReference type="InterPro" id="IPR011993">
    <property type="entry name" value="PH-like_dom_sf"/>
</dbReference>
<dbReference type="InterPro" id="IPR001849">
    <property type="entry name" value="PH_domain"/>
</dbReference>
<dbReference type="InterPro" id="IPR036028">
    <property type="entry name" value="SH3-like_dom_sf"/>
</dbReference>
<dbReference type="InterPro" id="IPR001452">
    <property type="entry name" value="SH3_domain"/>
</dbReference>
<dbReference type="InterPro" id="IPR055251">
    <property type="entry name" value="SOS1_NGEF_PH"/>
</dbReference>
<dbReference type="PANTHER" id="PTHR47544">
    <property type="entry name" value="RHO GUANINE NUCLEOTIDE EXCHANGE FACTOR 4"/>
    <property type="match status" value="1"/>
</dbReference>
<dbReference type="PANTHER" id="PTHR47544:SF4">
    <property type="entry name" value="RHO GUANINE NUCLEOTIDE EXCHANGE FACTOR 9"/>
    <property type="match status" value="1"/>
</dbReference>
<dbReference type="Pfam" id="PF00621">
    <property type="entry name" value="RhoGEF"/>
    <property type="match status" value="1"/>
</dbReference>
<dbReference type="Pfam" id="PF00018">
    <property type="entry name" value="SH3_1"/>
    <property type="match status" value="1"/>
</dbReference>
<dbReference type="Pfam" id="PF22697">
    <property type="entry name" value="SOS1_NGEF_PH"/>
    <property type="match status" value="1"/>
</dbReference>
<dbReference type="SMART" id="SM00233">
    <property type="entry name" value="PH"/>
    <property type="match status" value="1"/>
</dbReference>
<dbReference type="SMART" id="SM00325">
    <property type="entry name" value="RhoGEF"/>
    <property type="match status" value="1"/>
</dbReference>
<dbReference type="SMART" id="SM00326">
    <property type="entry name" value="SH3"/>
    <property type="match status" value="1"/>
</dbReference>
<dbReference type="SUPFAM" id="SSF48065">
    <property type="entry name" value="DBL homology domain (DH-domain)"/>
    <property type="match status" value="1"/>
</dbReference>
<dbReference type="SUPFAM" id="SSF50729">
    <property type="entry name" value="PH domain-like"/>
    <property type="match status" value="1"/>
</dbReference>
<dbReference type="SUPFAM" id="SSF50044">
    <property type="entry name" value="SH3-domain"/>
    <property type="match status" value="1"/>
</dbReference>
<dbReference type="PROSITE" id="PS50010">
    <property type="entry name" value="DH_2"/>
    <property type="match status" value="1"/>
</dbReference>
<dbReference type="PROSITE" id="PS50003">
    <property type="entry name" value="PH_DOMAIN"/>
    <property type="match status" value="1"/>
</dbReference>
<dbReference type="PROSITE" id="PS50002">
    <property type="entry name" value="SH3"/>
    <property type="match status" value="1"/>
</dbReference>